<evidence type="ECO:0000305" key="1"/>
<dbReference type="EMBL" id="U18466">
    <property type="protein sequence ID" value="AAA65300.1"/>
    <property type="molecule type" value="Genomic_DNA"/>
</dbReference>
<dbReference type="RefSeq" id="NP_042764.1">
    <property type="nucleotide sequence ID" value="NC_001659.2"/>
</dbReference>
<dbReference type="GeneID" id="22220300"/>
<dbReference type="KEGG" id="vg:22220300"/>
<dbReference type="Proteomes" id="UP000000624">
    <property type="component" value="Segment"/>
</dbReference>
<feature type="chain" id="PRO_0000373705" description="Uncharacterized protein C62L">
    <location>
        <begin position="1"/>
        <end position="62"/>
    </location>
</feature>
<proteinExistence type="inferred from homology"/>
<name>VF62_ASFB7</name>
<accession>Q65161</accession>
<keyword id="KW-1185">Reference proteome</keyword>
<protein>
    <recommendedName>
        <fullName>Uncharacterized protein C62L</fullName>
        <shortName>pC62L</shortName>
    </recommendedName>
</protein>
<reference key="1">
    <citation type="journal article" date="1995" name="Virology">
        <title>Analysis of the complete nucleotide sequence of African swine fever virus.</title>
        <authorList>
            <person name="Yanez R.J."/>
            <person name="Rodriguez J.M."/>
            <person name="Nogal M.L."/>
            <person name="Yuste L."/>
            <person name="Enriquez C."/>
            <person name="Rodriguez J.F."/>
            <person name="Vinuela E."/>
        </authorList>
    </citation>
    <scope>NUCLEOTIDE SEQUENCE [LARGE SCALE GENOMIC DNA]</scope>
</reference>
<organism>
    <name type="scientific">African swine fever virus (strain Badajoz 1971 Vero-adapted)</name>
    <name type="common">Ba71V</name>
    <name type="synonym">ASFV</name>
    <dbReference type="NCBI Taxonomy" id="10498"/>
    <lineage>
        <taxon>Viruses</taxon>
        <taxon>Varidnaviria</taxon>
        <taxon>Bamfordvirae</taxon>
        <taxon>Nucleocytoviricota</taxon>
        <taxon>Pokkesviricetes</taxon>
        <taxon>Asfuvirales</taxon>
        <taxon>Asfarviridae</taxon>
        <taxon>Asfivirus</taxon>
        <taxon>African swine fever virus</taxon>
    </lineage>
</organism>
<sequence>MNWGSISSGTPGLFVESIRNTPSVVKINVIFLKVISNTAVSVFWRDRRIRFESDWLNSYFQK</sequence>
<comment type="similarity">
    <text evidence="1">Belongs to the asfivirus C62L family.</text>
</comment>
<gene>
    <name type="ordered locus">Ba71V-070</name>
    <name type="ORF">C62L</name>
</gene>
<organismHost>
    <name type="scientific">Ornithodoros</name>
    <name type="common">relapsing fever ticks</name>
    <dbReference type="NCBI Taxonomy" id="6937"/>
</organismHost>
<organismHost>
    <name type="scientific">Sus scrofa</name>
    <name type="common">Pig</name>
    <dbReference type="NCBI Taxonomy" id="9823"/>
</organismHost>